<comment type="cofactor">
    <cofactor evidence="3">
        <name>[4Fe-4S] cluster</name>
        <dbReference type="ChEBI" id="CHEBI:49883"/>
    </cofactor>
    <text evidence="3">Binds 1 [4Fe-4S] cluster. The cluster is coordinated with 3 cysteines and an exchangeable S-adenosyl-L-methionine.</text>
</comment>
<comment type="subcellular location">
    <subcellularLocation>
        <location evidence="3">Cell membrane</location>
        <topology evidence="3">Multi-pass membrane protein</topology>
    </subcellularLocation>
</comment>
<sequence>MRWARQAVAVNGMPVDDGALPGLQRIGLVRSVRAPQFDGITFHEVLCKSALNKVPNAAALPFRYTVNGYRGCSHACRYCFARPTHEYLDFNPGTDFDTQVVVKTNVAAVLRHELRRPSWRRETVALGTNTDPYQRAEGRYALMPGIIGALAASGTPLSILTKGTLLRRDLPLIAEAAQQVPVSVAVSLAVGDPELHRDVESGTPTPQARLALITAIRAAGLDCHVMVAPVLPQLTDSGEHLDQLLGQIAAAGATGVTVFGLHLRGSTRGWFMCWLARAHPELVSRYRELYRRGPYLPPSYREMLRERVAPLIAKYRLAGDHRPAPPETEAALVPVQATLF</sequence>
<gene>
    <name type="ordered locus">MT2655</name>
</gene>
<accession>P9WL78</accession>
<accession>L0TBP0</accession>
<accession>P65023</accession>
<accession>Q50643</accession>
<organism>
    <name type="scientific">Mycobacterium tuberculosis (strain CDC 1551 / Oshkosh)</name>
    <dbReference type="NCBI Taxonomy" id="83331"/>
    <lineage>
        <taxon>Bacteria</taxon>
        <taxon>Bacillati</taxon>
        <taxon>Actinomycetota</taxon>
        <taxon>Actinomycetes</taxon>
        <taxon>Mycobacteriales</taxon>
        <taxon>Mycobacteriaceae</taxon>
        <taxon>Mycobacterium</taxon>
        <taxon>Mycobacterium tuberculosis complex</taxon>
    </lineage>
</organism>
<name>Y2578_MYCTO</name>
<dbReference type="EMBL" id="AE000516">
    <property type="protein sequence ID" value="AAK46968.1"/>
    <property type="molecule type" value="Genomic_DNA"/>
</dbReference>
<dbReference type="PIR" id="A70725">
    <property type="entry name" value="A70725"/>
</dbReference>
<dbReference type="RefSeq" id="WP_003413359.1">
    <property type="nucleotide sequence ID" value="NZ_KK341227.1"/>
</dbReference>
<dbReference type="KEGG" id="mtc:MT2655"/>
<dbReference type="PATRIC" id="fig|83331.31.peg.2862"/>
<dbReference type="HOGENOM" id="CLU_015525_1_0_11"/>
<dbReference type="Proteomes" id="UP000001020">
    <property type="component" value="Chromosome"/>
</dbReference>
<dbReference type="GO" id="GO:0005886">
    <property type="term" value="C:plasma membrane"/>
    <property type="evidence" value="ECO:0007669"/>
    <property type="project" value="UniProtKB-SubCell"/>
</dbReference>
<dbReference type="GO" id="GO:0051539">
    <property type="term" value="F:4 iron, 4 sulfur cluster binding"/>
    <property type="evidence" value="ECO:0007669"/>
    <property type="project" value="UniProtKB-KW"/>
</dbReference>
<dbReference type="GO" id="GO:0003824">
    <property type="term" value="F:catalytic activity"/>
    <property type="evidence" value="ECO:0007669"/>
    <property type="project" value="InterPro"/>
</dbReference>
<dbReference type="GO" id="GO:0046872">
    <property type="term" value="F:metal ion binding"/>
    <property type="evidence" value="ECO:0007669"/>
    <property type="project" value="UniProtKB-KW"/>
</dbReference>
<dbReference type="CDD" id="cd01335">
    <property type="entry name" value="Radical_SAM"/>
    <property type="match status" value="1"/>
</dbReference>
<dbReference type="Gene3D" id="3.80.30.30">
    <property type="match status" value="1"/>
</dbReference>
<dbReference type="InterPro" id="IPR006638">
    <property type="entry name" value="Elp3/MiaA/NifB-like_rSAM"/>
</dbReference>
<dbReference type="InterPro" id="IPR040086">
    <property type="entry name" value="MJ0683-like"/>
</dbReference>
<dbReference type="InterPro" id="IPR007197">
    <property type="entry name" value="rSAM"/>
</dbReference>
<dbReference type="NCBIfam" id="NF038135">
    <property type="entry name" value="rSAM_Rv2578c"/>
    <property type="match status" value="1"/>
</dbReference>
<dbReference type="PANTHER" id="PTHR43432">
    <property type="entry name" value="SLR0285 PROTEIN"/>
    <property type="match status" value="1"/>
</dbReference>
<dbReference type="PANTHER" id="PTHR43432:SF3">
    <property type="entry name" value="SLR0285 PROTEIN"/>
    <property type="match status" value="1"/>
</dbReference>
<dbReference type="Pfam" id="PF04055">
    <property type="entry name" value="Radical_SAM"/>
    <property type="match status" value="1"/>
</dbReference>
<dbReference type="SFLD" id="SFLDS00029">
    <property type="entry name" value="Radical_SAM"/>
    <property type="match status" value="1"/>
</dbReference>
<dbReference type="SFLD" id="SFLDG01084">
    <property type="entry name" value="Uncharacterised_Radical_SAM_Su"/>
    <property type="match status" value="1"/>
</dbReference>
<dbReference type="SMART" id="SM00729">
    <property type="entry name" value="Elp3"/>
    <property type="match status" value="1"/>
</dbReference>
<dbReference type="SUPFAM" id="SSF102114">
    <property type="entry name" value="Radical SAM enzymes"/>
    <property type="match status" value="1"/>
</dbReference>
<dbReference type="PROSITE" id="PS51918">
    <property type="entry name" value="RADICAL_SAM"/>
    <property type="match status" value="1"/>
</dbReference>
<reference key="1">
    <citation type="journal article" date="2002" name="J. Bacteriol.">
        <title>Whole-genome comparison of Mycobacterium tuberculosis clinical and laboratory strains.</title>
        <authorList>
            <person name="Fleischmann R.D."/>
            <person name="Alland D."/>
            <person name="Eisen J.A."/>
            <person name="Carpenter L."/>
            <person name="White O."/>
            <person name="Peterson J.D."/>
            <person name="DeBoy R.T."/>
            <person name="Dodson R.J."/>
            <person name="Gwinn M.L."/>
            <person name="Haft D.H."/>
            <person name="Hickey E.K."/>
            <person name="Kolonay J.F."/>
            <person name="Nelson W.C."/>
            <person name="Umayam L.A."/>
            <person name="Ermolaeva M.D."/>
            <person name="Salzberg S.L."/>
            <person name="Delcher A."/>
            <person name="Utterback T.R."/>
            <person name="Weidman J.F."/>
            <person name="Khouri H.M."/>
            <person name="Gill J."/>
            <person name="Mikula A."/>
            <person name="Bishai W."/>
            <person name="Jacobs W.R. Jr."/>
            <person name="Venter J.C."/>
            <person name="Fraser C.M."/>
        </authorList>
    </citation>
    <scope>NUCLEOTIDE SEQUENCE [LARGE SCALE GENOMIC DNA]</scope>
    <source>
        <strain>CDC 1551 / Oshkosh</strain>
    </source>
</reference>
<evidence type="ECO:0000255" key="1"/>
<evidence type="ECO:0000255" key="2">
    <source>
        <dbReference type="PROSITE-ProRule" id="PRU01266"/>
    </source>
</evidence>
<evidence type="ECO:0000305" key="3"/>
<feature type="chain" id="PRO_0000427526" description="Uncharacterized protein MT2655">
    <location>
        <begin position="1"/>
        <end position="340"/>
    </location>
</feature>
<feature type="transmembrane region" description="Helical" evidence="1">
    <location>
        <begin position="140"/>
        <end position="160"/>
    </location>
</feature>
<feature type="transmembrane region" description="Helical" evidence="1">
    <location>
        <begin position="243"/>
        <end position="263"/>
    </location>
</feature>
<feature type="domain" description="Radical SAM core" evidence="2">
    <location>
        <begin position="58"/>
        <end position="307"/>
    </location>
</feature>
<feature type="binding site" evidence="1">
    <location>
        <position position="72"/>
    </location>
    <ligand>
        <name>[4Fe-4S] cluster</name>
        <dbReference type="ChEBI" id="CHEBI:49883"/>
        <note>4Fe-4S-S-AdoMet</note>
    </ligand>
</feature>
<feature type="binding site" evidence="1">
    <location>
        <position position="76"/>
    </location>
    <ligand>
        <name>[4Fe-4S] cluster</name>
        <dbReference type="ChEBI" id="CHEBI:49883"/>
        <note>4Fe-4S-S-AdoMet</note>
    </ligand>
</feature>
<feature type="binding site" evidence="1">
    <location>
        <position position="79"/>
    </location>
    <ligand>
        <name>[4Fe-4S] cluster</name>
        <dbReference type="ChEBI" id="CHEBI:49883"/>
        <note>4Fe-4S-S-AdoMet</note>
    </ligand>
</feature>
<protein>
    <recommendedName>
        <fullName>Uncharacterized protein MT2655</fullName>
    </recommendedName>
</protein>
<keyword id="KW-0004">4Fe-4S</keyword>
<keyword id="KW-1003">Cell membrane</keyword>
<keyword id="KW-0408">Iron</keyword>
<keyword id="KW-0411">Iron-sulfur</keyword>
<keyword id="KW-0472">Membrane</keyword>
<keyword id="KW-0479">Metal-binding</keyword>
<keyword id="KW-1185">Reference proteome</keyword>
<keyword id="KW-0949">S-adenosyl-L-methionine</keyword>
<keyword id="KW-0812">Transmembrane</keyword>
<keyword id="KW-1133">Transmembrane helix</keyword>
<proteinExistence type="predicted"/>